<proteinExistence type="inferred from homology"/>
<evidence type="ECO:0000250" key="1"/>
<evidence type="ECO:0000255" key="2"/>
<evidence type="ECO:0000305" key="3"/>
<name>CRTQ_STAAC</name>
<feature type="chain" id="PRO_0000284859" description="4,4'-diaponeurosporenoate glycosyltransferase">
    <location>
        <begin position="1"/>
        <end position="375"/>
    </location>
</feature>
<feature type="transmembrane region" description="Helical" evidence="2">
    <location>
        <begin position="3"/>
        <end position="23"/>
    </location>
</feature>
<feature type="transmembrane region" description="Helical" evidence="2">
    <location>
        <begin position="164"/>
        <end position="184"/>
    </location>
</feature>
<feature type="transmembrane region" description="Helical" evidence="2">
    <location>
        <begin position="277"/>
        <end position="297"/>
    </location>
</feature>
<feature type="transmembrane region" description="Helical" evidence="2">
    <location>
        <begin position="330"/>
        <end position="350"/>
    </location>
</feature>
<comment type="function">
    <text evidence="1">Catalyzes the glycosylation of 4,4'-diaponeurosporenoate, i.e. the esterification of glucose at the C1'' position with the carboxyl group of 4,4'-diaponeurosporenic acid, to form glycosyl-4,4'-diaponeurosporenoate. This is a step in the biosynthesis of staphyloxanthin, an orange pigment present in most staphylococci strains (By similarity).</text>
</comment>
<comment type="pathway">
    <text>Carotenoid biosynthesis; staphyloxanthin biosynthesis; staphyloxanthin from farnesyl diphosphate: step 4/5.</text>
</comment>
<comment type="subcellular location">
    <subcellularLocation>
        <location evidence="3">Cell membrane</location>
        <topology evidence="3">Multi-pass membrane protein</topology>
    </subcellularLocation>
</comment>
<comment type="similarity">
    <text evidence="3">Belongs to the glycosyltransferase 2 family. CrtQ subfamily.</text>
</comment>
<comment type="sequence caution" evidence="3">
    <conflict type="erroneous initiation">
        <sequence resource="EMBL-CDS" id="AAW38580"/>
    </conflict>
</comment>
<protein>
    <recommendedName>
        <fullName>4,4'-diaponeurosporenoate glycosyltransferase</fullName>
        <ecNumber>2.4.1.-</ecNumber>
    </recommendedName>
</protein>
<gene>
    <name type="primary">crtQ</name>
    <name type="ordered locus">SACOL2578</name>
</gene>
<sequence>MKWLSRILTVIVTMSMACGALIFNRRHQLKAKTLNFNHKALTIIIPARNEEKRIGHLLHSIIQQQVPVDVIVMNDGSTDETARVARSYGATVVDVVDDTDGKWYGKSHACYQGVTHACTNRIAFVDADVTFLRKDAVETLINQYQLQGEKGLLSVQPYHITKRFYEGFSAIFNLMTVVGMNVFSTLDDGRTNQHAFGPVTLTNKEDYYATGGHKSANRHIIEGFALGSAYTSQSLPVTVYEGFPFVAFRMYQEGFQSLQEGWTKHLSTGAGGTKPKIMTAIVLWLFGSIASILGLCLSLKYRQMSVRKMVALYLSYTTQFIYLHRRVGQFSNLLMVCHPLLFMFFTKIFIQSWKQTHRYGVVEWKGRQYSISKEQ</sequence>
<dbReference type="EC" id="2.4.1.-"/>
<dbReference type="EMBL" id="CP000046">
    <property type="protein sequence ID" value="AAW38580.1"/>
    <property type="status" value="ALT_INIT"/>
    <property type="molecule type" value="Genomic_DNA"/>
</dbReference>
<dbReference type="RefSeq" id="WP_000871731.1">
    <property type="nucleotide sequence ID" value="NZ_JBGOFO010000001.1"/>
</dbReference>
<dbReference type="SMR" id="Q5HCY7"/>
<dbReference type="CAZy" id="GT2">
    <property type="family name" value="Glycosyltransferase Family 2"/>
</dbReference>
<dbReference type="KEGG" id="sac:SACOL2578"/>
<dbReference type="HOGENOM" id="CLU_038143_1_0_9"/>
<dbReference type="UniPathway" id="UPA00029">
    <property type="reaction ID" value="UER00559"/>
</dbReference>
<dbReference type="Proteomes" id="UP000000530">
    <property type="component" value="Chromosome"/>
</dbReference>
<dbReference type="GO" id="GO:0005886">
    <property type="term" value="C:plasma membrane"/>
    <property type="evidence" value="ECO:0007669"/>
    <property type="project" value="UniProtKB-SubCell"/>
</dbReference>
<dbReference type="GO" id="GO:0016757">
    <property type="term" value="F:glycosyltransferase activity"/>
    <property type="evidence" value="ECO:0007669"/>
    <property type="project" value="UniProtKB-KW"/>
</dbReference>
<dbReference type="GO" id="GO:0016117">
    <property type="term" value="P:carotenoid biosynthetic process"/>
    <property type="evidence" value="ECO:0007669"/>
    <property type="project" value="UniProtKB-KW"/>
</dbReference>
<dbReference type="CDD" id="cd00761">
    <property type="entry name" value="Glyco_tranf_GTA_type"/>
    <property type="match status" value="1"/>
</dbReference>
<dbReference type="FunFam" id="3.90.550.10:FF:000172">
    <property type="entry name" value="Hpnb"/>
    <property type="match status" value="1"/>
</dbReference>
<dbReference type="Gene3D" id="3.90.550.10">
    <property type="entry name" value="Spore Coat Polysaccharide Biosynthesis Protein SpsA, Chain A"/>
    <property type="match status" value="1"/>
</dbReference>
<dbReference type="InterPro" id="IPR001173">
    <property type="entry name" value="Glyco_trans_2-like"/>
</dbReference>
<dbReference type="InterPro" id="IPR029044">
    <property type="entry name" value="Nucleotide-diphossugar_trans"/>
</dbReference>
<dbReference type="PANTHER" id="PTHR43646">
    <property type="entry name" value="GLYCOSYLTRANSFERASE"/>
    <property type="match status" value="1"/>
</dbReference>
<dbReference type="PANTHER" id="PTHR43646:SF2">
    <property type="entry name" value="GLYCOSYLTRANSFERASE 2-LIKE DOMAIN-CONTAINING PROTEIN"/>
    <property type="match status" value="1"/>
</dbReference>
<dbReference type="Pfam" id="PF00535">
    <property type="entry name" value="Glycos_transf_2"/>
    <property type="match status" value="1"/>
</dbReference>
<dbReference type="SUPFAM" id="SSF53448">
    <property type="entry name" value="Nucleotide-diphospho-sugar transferases"/>
    <property type="match status" value="1"/>
</dbReference>
<organism>
    <name type="scientific">Staphylococcus aureus (strain COL)</name>
    <dbReference type="NCBI Taxonomy" id="93062"/>
    <lineage>
        <taxon>Bacteria</taxon>
        <taxon>Bacillati</taxon>
        <taxon>Bacillota</taxon>
        <taxon>Bacilli</taxon>
        <taxon>Bacillales</taxon>
        <taxon>Staphylococcaceae</taxon>
        <taxon>Staphylococcus</taxon>
    </lineage>
</organism>
<keyword id="KW-0125">Carotenoid biosynthesis</keyword>
<keyword id="KW-1003">Cell membrane</keyword>
<keyword id="KW-0328">Glycosyltransferase</keyword>
<keyword id="KW-0472">Membrane</keyword>
<keyword id="KW-0808">Transferase</keyword>
<keyword id="KW-0812">Transmembrane</keyword>
<keyword id="KW-1133">Transmembrane helix</keyword>
<accession>Q5HCY7</accession>
<reference key="1">
    <citation type="journal article" date="2005" name="J. Bacteriol.">
        <title>Insights on evolution of virulence and resistance from the complete genome analysis of an early methicillin-resistant Staphylococcus aureus strain and a biofilm-producing methicillin-resistant Staphylococcus epidermidis strain.</title>
        <authorList>
            <person name="Gill S.R."/>
            <person name="Fouts D.E."/>
            <person name="Archer G.L."/>
            <person name="Mongodin E.F."/>
            <person name="DeBoy R.T."/>
            <person name="Ravel J."/>
            <person name="Paulsen I.T."/>
            <person name="Kolonay J.F."/>
            <person name="Brinkac L.M."/>
            <person name="Beanan M.J."/>
            <person name="Dodson R.J."/>
            <person name="Daugherty S.C."/>
            <person name="Madupu R."/>
            <person name="Angiuoli S.V."/>
            <person name="Durkin A.S."/>
            <person name="Haft D.H."/>
            <person name="Vamathevan J.J."/>
            <person name="Khouri H."/>
            <person name="Utterback T.R."/>
            <person name="Lee C."/>
            <person name="Dimitrov G."/>
            <person name="Jiang L."/>
            <person name="Qin H."/>
            <person name="Weidman J."/>
            <person name="Tran K."/>
            <person name="Kang K.H."/>
            <person name="Hance I.R."/>
            <person name="Nelson K.E."/>
            <person name="Fraser C.M."/>
        </authorList>
    </citation>
    <scope>NUCLEOTIDE SEQUENCE [LARGE SCALE GENOMIC DNA]</scope>
    <source>
        <strain>COL</strain>
    </source>
</reference>